<gene>
    <name evidence="1" type="primary">rplX</name>
    <name type="ordered locus">Ccon26_18740</name>
    <name type="ORF">CCC13826_1766</name>
</gene>
<keyword id="KW-0687">Ribonucleoprotein</keyword>
<keyword id="KW-0689">Ribosomal protein</keyword>
<keyword id="KW-0694">RNA-binding</keyword>
<keyword id="KW-0699">rRNA-binding</keyword>
<comment type="function">
    <text evidence="1">One of two assembly initiator proteins, it binds directly to the 5'-end of the 23S rRNA, where it nucleates assembly of the 50S subunit.</text>
</comment>
<comment type="function">
    <text evidence="1">One of the proteins that surrounds the polypeptide exit tunnel on the outside of the subunit.</text>
</comment>
<comment type="subunit">
    <text evidence="1">Part of the 50S ribosomal subunit.</text>
</comment>
<comment type="similarity">
    <text evidence="1">Belongs to the universal ribosomal protein uL24 family.</text>
</comment>
<dbReference type="EMBL" id="CP000792">
    <property type="protein sequence ID" value="EAT98098.1"/>
    <property type="molecule type" value="Genomic_DNA"/>
</dbReference>
<dbReference type="RefSeq" id="WP_009295260.1">
    <property type="nucleotide sequence ID" value="NC_009802.2"/>
</dbReference>
<dbReference type="SMR" id="A7ZG01"/>
<dbReference type="STRING" id="360104.CCC13826_1766"/>
<dbReference type="GeneID" id="28663424"/>
<dbReference type="KEGG" id="cco:CCC13826_1766"/>
<dbReference type="eggNOG" id="COG0198">
    <property type="taxonomic scope" value="Bacteria"/>
</dbReference>
<dbReference type="HOGENOM" id="CLU_093315_3_0_7"/>
<dbReference type="OrthoDB" id="9807419at2"/>
<dbReference type="Proteomes" id="UP000001121">
    <property type="component" value="Chromosome"/>
</dbReference>
<dbReference type="GO" id="GO:1990904">
    <property type="term" value="C:ribonucleoprotein complex"/>
    <property type="evidence" value="ECO:0007669"/>
    <property type="project" value="UniProtKB-KW"/>
</dbReference>
<dbReference type="GO" id="GO:0005840">
    <property type="term" value="C:ribosome"/>
    <property type="evidence" value="ECO:0007669"/>
    <property type="project" value="UniProtKB-KW"/>
</dbReference>
<dbReference type="GO" id="GO:0019843">
    <property type="term" value="F:rRNA binding"/>
    <property type="evidence" value="ECO:0007669"/>
    <property type="project" value="UniProtKB-UniRule"/>
</dbReference>
<dbReference type="GO" id="GO:0003735">
    <property type="term" value="F:structural constituent of ribosome"/>
    <property type="evidence" value="ECO:0007669"/>
    <property type="project" value="InterPro"/>
</dbReference>
<dbReference type="GO" id="GO:0006412">
    <property type="term" value="P:translation"/>
    <property type="evidence" value="ECO:0007669"/>
    <property type="project" value="UniProtKB-UniRule"/>
</dbReference>
<dbReference type="CDD" id="cd06089">
    <property type="entry name" value="KOW_RPL26"/>
    <property type="match status" value="1"/>
</dbReference>
<dbReference type="Gene3D" id="2.30.30.30">
    <property type="match status" value="1"/>
</dbReference>
<dbReference type="HAMAP" id="MF_01326_B">
    <property type="entry name" value="Ribosomal_uL24_B"/>
    <property type="match status" value="1"/>
</dbReference>
<dbReference type="InterPro" id="IPR005824">
    <property type="entry name" value="KOW"/>
</dbReference>
<dbReference type="InterPro" id="IPR014722">
    <property type="entry name" value="Rib_uL2_dom2"/>
</dbReference>
<dbReference type="InterPro" id="IPR003256">
    <property type="entry name" value="Ribosomal_uL24"/>
</dbReference>
<dbReference type="InterPro" id="IPR005825">
    <property type="entry name" value="Ribosomal_uL24_CS"/>
</dbReference>
<dbReference type="InterPro" id="IPR041988">
    <property type="entry name" value="Ribosomal_uL24_KOW"/>
</dbReference>
<dbReference type="InterPro" id="IPR008991">
    <property type="entry name" value="Translation_prot_SH3-like_sf"/>
</dbReference>
<dbReference type="NCBIfam" id="TIGR01079">
    <property type="entry name" value="rplX_bact"/>
    <property type="match status" value="1"/>
</dbReference>
<dbReference type="PANTHER" id="PTHR12903">
    <property type="entry name" value="MITOCHONDRIAL RIBOSOMAL PROTEIN L24"/>
    <property type="match status" value="1"/>
</dbReference>
<dbReference type="Pfam" id="PF00467">
    <property type="entry name" value="KOW"/>
    <property type="match status" value="1"/>
</dbReference>
<dbReference type="Pfam" id="PF17136">
    <property type="entry name" value="ribosomal_L24"/>
    <property type="match status" value="1"/>
</dbReference>
<dbReference type="SMART" id="SM00739">
    <property type="entry name" value="KOW"/>
    <property type="match status" value="1"/>
</dbReference>
<dbReference type="SUPFAM" id="SSF50104">
    <property type="entry name" value="Translation proteins SH3-like domain"/>
    <property type="match status" value="1"/>
</dbReference>
<dbReference type="PROSITE" id="PS01108">
    <property type="entry name" value="RIBOSOMAL_L24"/>
    <property type="match status" value="1"/>
</dbReference>
<reference key="1">
    <citation type="submission" date="2007-10" db="EMBL/GenBank/DDBJ databases">
        <title>Genome sequence of Campylobacter concisus 13826 isolated from human feces.</title>
        <authorList>
            <person name="Fouts D.E."/>
            <person name="Mongodin E.F."/>
            <person name="Puiu D."/>
            <person name="Sebastian Y."/>
            <person name="Miller W.G."/>
            <person name="Mandrell R.E."/>
            <person name="On S."/>
            <person name="Nelson K.E."/>
        </authorList>
    </citation>
    <scope>NUCLEOTIDE SEQUENCE [LARGE SCALE GENOMIC DNA]</scope>
    <source>
        <strain>13826</strain>
    </source>
</reference>
<proteinExistence type="inferred from homology"/>
<organism>
    <name type="scientific">Campylobacter concisus (strain 13826)</name>
    <dbReference type="NCBI Taxonomy" id="360104"/>
    <lineage>
        <taxon>Bacteria</taxon>
        <taxon>Pseudomonadati</taxon>
        <taxon>Campylobacterota</taxon>
        <taxon>Epsilonproteobacteria</taxon>
        <taxon>Campylobacterales</taxon>
        <taxon>Campylobacteraceae</taxon>
        <taxon>Campylobacter</taxon>
    </lineage>
</organism>
<feature type="chain" id="PRO_0000355649" description="Large ribosomal subunit protein uL24">
    <location>
        <begin position="1"/>
        <end position="78"/>
    </location>
</feature>
<feature type="region of interest" description="Disordered" evidence="2">
    <location>
        <begin position="52"/>
        <end position="78"/>
    </location>
</feature>
<accession>A7ZG01</accession>
<protein>
    <recommendedName>
        <fullName evidence="1">Large ribosomal subunit protein uL24</fullName>
    </recommendedName>
    <alternativeName>
        <fullName evidence="3">50S ribosomal protein L24</fullName>
    </alternativeName>
</protein>
<name>RL24_CAMC1</name>
<sequence>MANVKFKVKKGDTVKIIAGDDKGKTGKILAVLAKKGQVIVEGCKVAKKAIKPSEKTPNGGHVNKEMPIDISNVAKVEG</sequence>
<evidence type="ECO:0000255" key="1">
    <source>
        <dbReference type="HAMAP-Rule" id="MF_01326"/>
    </source>
</evidence>
<evidence type="ECO:0000256" key="2">
    <source>
        <dbReference type="SAM" id="MobiDB-lite"/>
    </source>
</evidence>
<evidence type="ECO:0000305" key="3"/>